<gene>
    <name type="primary">ERMN</name>
    <name type="synonym">KIAA1189</name>
</gene>
<name>ERMIN_HUMAN</name>
<keyword id="KW-0009">Actin-binding</keyword>
<keyword id="KW-0025">Alternative splicing</keyword>
<keyword id="KW-0963">Cytoplasm</keyword>
<keyword id="KW-0206">Cytoskeleton</keyword>
<keyword id="KW-0597">Phosphoprotein</keyword>
<keyword id="KW-1267">Proteomics identification</keyword>
<keyword id="KW-1185">Reference proteome</keyword>
<proteinExistence type="evidence at protein level"/>
<protein>
    <recommendedName>
        <fullName>Ermin</fullName>
    </recommendedName>
    <alternativeName>
        <fullName>Juxtanodin</fullName>
        <shortName>JN</shortName>
    </alternativeName>
</protein>
<feature type="chain" id="PRO_0000314748" description="Ermin">
    <location>
        <begin position="1"/>
        <end position="284"/>
    </location>
</feature>
<feature type="region of interest" description="Disordered" evidence="4">
    <location>
        <begin position="1"/>
        <end position="23"/>
    </location>
</feature>
<feature type="region of interest" description="Disordered" evidence="4">
    <location>
        <begin position="110"/>
        <end position="251"/>
    </location>
</feature>
<feature type="region of interest" description="Binds actin" evidence="1">
    <location>
        <begin position="265"/>
        <end position="284"/>
    </location>
</feature>
<feature type="compositionally biased region" description="Basic and acidic residues" evidence="4">
    <location>
        <begin position="126"/>
        <end position="140"/>
    </location>
</feature>
<feature type="compositionally biased region" description="Basic and acidic residues" evidence="4">
    <location>
        <begin position="171"/>
        <end position="183"/>
    </location>
</feature>
<feature type="compositionally biased region" description="Acidic residues" evidence="4">
    <location>
        <begin position="184"/>
        <end position="200"/>
    </location>
</feature>
<feature type="compositionally biased region" description="Basic and acidic residues" evidence="4">
    <location>
        <begin position="201"/>
        <end position="220"/>
    </location>
</feature>
<feature type="compositionally biased region" description="Low complexity" evidence="4">
    <location>
        <begin position="225"/>
        <end position="235"/>
    </location>
</feature>
<feature type="modified residue" description="Phosphoserine" evidence="3">
    <location>
        <position position="73"/>
    </location>
</feature>
<feature type="modified residue" description="Phosphoserine" evidence="2">
    <location>
        <position position="214"/>
    </location>
</feature>
<feature type="modified residue" description="Phosphoserine" evidence="2">
    <location>
        <position position="226"/>
    </location>
</feature>
<feature type="modified residue" description="Phosphoserine" evidence="2">
    <location>
        <position position="230"/>
    </location>
</feature>
<feature type="modified residue" description="Phosphoserine" evidence="2">
    <location>
        <position position="233"/>
    </location>
</feature>
<feature type="modified residue" description="Phosphothreonine" evidence="2">
    <location>
        <position position="237"/>
    </location>
</feature>
<feature type="splice variant" id="VSP_036982" description="In isoform 2." evidence="6">
    <original>M</original>
    <variation>MKTLSPDRIQPHIM</variation>
    <location>
        <position position="1"/>
    </location>
</feature>
<sequence length="284" mass="32783">MTDVPATFTQAECNGDKPPENGQQTITKISEELTDVDSPLPHYRVEPSLEGALTKGSQEERRKLQGNMLLNSSMEDKMLKENPEEKLFIVHKAITDLSLQETSADEMTFREGHQWEKIPLSGSNQEIRRQKERITEQPLKEEEDEDRKNKGHQAAEIEWLGFRKPSQADMLHSKHDEEQKVWDEEIDDDDDDNCNNDEDEVRVIEFKKKHEEVSQFKEEGDASEDSPLSSASSQAVTPDEQPTLGKKSDISRNAYSRYNTISYRKIRKGNTKQRIDEFESMMHL</sequence>
<dbReference type="EMBL" id="DQ334271">
    <property type="protein sequence ID" value="ABC67251.1"/>
    <property type="molecule type" value="mRNA"/>
</dbReference>
<dbReference type="EMBL" id="AB033015">
    <property type="protein sequence ID" value="BAA86503.1"/>
    <property type="status" value="ALT_INIT"/>
    <property type="molecule type" value="mRNA"/>
</dbReference>
<dbReference type="EMBL" id="AK296477">
    <property type="protein sequence ID" value="BAG59118.1"/>
    <property type="molecule type" value="mRNA"/>
</dbReference>
<dbReference type="EMBL" id="AC016732">
    <property type="protein sequence ID" value="AAY14889.1"/>
    <property type="molecule type" value="Genomic_DNA"/>
</dbReference>
<dbReference type="EMBL" id="CH471058">
    <property type="protein sequence ID" value="EAX11448.1"/>
    <property type="molecule type" value="Genomic_DNA"/>
</dbReference>
<dbReference type="EMBL" id="BC026345">
    <property type="protein sequence ID" value="AAH26345.1"/>
    <property type="molecule type" value="mRNA"/>
</dbReference>
<dbReference type="CCDS" id="CCDS42764.1">
    <molecule id="Q8TAM6-2"/>
</dbReference>
<dbReference type="CCDS" id="CCDS46431.1">
    <molecule id="Q8TAM6-1"/>
</dbReference>
<dbReference type="RefSeq" id="NP_001009959.1">
    <molecule id="Q8TAM6-2"/>
    <property type="nucleotide sequence ID" value="NM_001009959.3"/>
</dbReference>
<dbReference type="RefSeq" id="NP_001291273.1">
    <molecule id="Q8TAM6-1"/>
    <property type="nucleotide sequence ID" value="NM_001304344.2"/>
</dbReference>
<dbReference type="RefSeq" id="NP_001291274.1">
    <molecule id="Q8TAM6-1"/>
    <property type="nucleotide sequence ID" value="NM_001304345.2"/>
</dbReference>
<dbReference type="RefSeq" id="NP_001291275.1">
    <property type="nucleotide sequence ID" value="NM_001304346.1"/>
</dbReference>
<dbReference type="RefSeq" id="NP_065762.1">
    <molecule id="Q8TAM6-1"/>
    <property type="nucleotide sequence ID" value="NM_020711.3"/>
</dbReference>
<dbReference type="SMR" id="Q8TAM6"/>
<dbReference type="BioGRID" id="121541">
    <property type="interactions" value="24"/>
</dbReference>
<dbReference type="FunCoup" id="Q8TAM6">
    <property type="interactions" value="39"/>
</dbReference>
<dbReference type="IntAct" id="Q8TAM6">
    <property type="interactions" value="3"/>
</dbReference>
<dbReference type="STRING" id="9606.ENSP00000380453"/>
<dbReference type="iPTMnet" id="Q8TAM6"/>
<dbReference type="PhosphoSitePlus" id="Q8TAM6"/>
<dbReference type="BioMuta" id="ERMN"/>
<dbReference type="DMDM" id="74730370"/>
<dbReference type="jPOST" id="Q8TAM6"/>
<dbReference type="MassIVE" id="Q8TAM6"/>
<dbReference type="PaxDb" id="9606-ENSP00000380453"/>
<dbReference type="PeptideAtlas" id="Q8TAM6"/>
<dbReference type="ProteomicsDB" id="73898">
    <molecule id="Q8TAM6-1"/>
</dbReference>
<dbReference type="ProteomicsDB" id="73899">
    <molecule id="Q8TAM6-2"/>
</dbReference>
<dbReference type="Antibodypedia" id="33703">
    <property type="antibodies" value="109 antibodies from 21 providers"/>
</dbReference>
<dbReference type="DNASU" id="57471"/>
<dbReference type="Ensembl" id="ENST00000397283.6">
    <molecule id="Q8TAM6-2"/>
    <property type="protein sequence ID" value="ENSP00000380453.2"/>
    <property type="gene ID" value="ENSG00000136541.15"/>
</dbReference>
<dbReference type="Ensembl" id="ENST00000410096.6">
    <molecule id="Q8TAM6-1"/>
    <property type="protein sequence ID" value="ENSP00000387047.1"/>
    <property type="gene ID" value="ENSG00000136541.15"/>
</dbReference>
<dbReference type="GeneID" id="57471"/>
<dbReference type="KEGG" id="hsa:57471"/>
<dbReference type="MANE-Select" id="ENST00000410096.6">
    <property type="protein sequence ID" value="ENSP00000387047.1"/>
    <property type="RefSeq nucleotide sequence ID" value="NM_020711.3"/>
    <property type="RefSeq protein sequence ID" value="NP_065762.1"/>
</dbReference>
<dbReference type="UCSC" id="uc002tzh.4">
    <molecule id="Q8TAM6-1"/>
    <property type="organism name" value="human"/>
</dbReference>
<dbReference type="AGR" id="HGNC:29208"/>
<dbReference type="CTD" id="57471"/>
<dbReference type="DisGeNET" id="57471"/>
<dbReference type="GeneCards" id="ERMN"/>
<dbReference type="HGNC" id="HGNC:29208">
    <property type="gene designation" value="ERMN"/>
</dbReference>
<dbReference type="HPA" id="ENSG00000136541">
    <property type="expression patterns" value="Tissue enriched (brain)"/>
</dbReference>
<dbReference type="MIM" id="610072">
    <property type="type" value="gene"/>
</dbReference>
<dbReference type="neXtProt" id="NX_Q8TAM6"/>
<dbReference type="OpenTargets" id="ENSG00000136541"/>
<dbReference type="PharmGKB" id="PA162385355"/>
<dbReference type="VEuPathDB" id="HostDB:ENSG00000136541"/>
<dbReference type="eggNOG" id="KOG2030">
    <property type="taxonomic scope" value="Eukaryota"/>
</dbReference>
<dbReference type="GeneTree" id="ENSGT01090000260082"/>
<dbReference type="HOGENOM" id="CLU_090355_0_0_1"/>
<dbReference type="InParanoid" id="Q8TAM6"/>
<dbReference type="OMA" id="TPPYYRV"/>
<dbReference type="OrthoDB" id="9947518at2759"/>
<dbReference type="PAN-GO" id="Q8TAM6">
    <property type="GO annotations" value="11 GO annotations based on evolutionary models"/>
</dbReference>
<dbReference type="PhylomeDB" id="Q8TAM6"/>
<dbReference type="TreeFam" id="TF337225"/>
<dbReference type="PathwayCommons" id="Q8TAM6"/>
<dbReference type="SignaLink" id="Q8TAM6"/>
<dbReference type="SIGNOR" id="Q8TAM6"/>
<dbReference type="BioGRID-ORCS" id="57471">
    <property type="hits" value="12 hits in 1140 CRISPR screens"/>
</dbReference>
<dbReference type="ChiTaRS" id="ERMN">
    <property type="organism name" value="human"/>
</dbReference>
<dbReference type="GenomeRNAi" id="57471"/>
<dbReference type="Pharos" id="Q8TAM6">
    <property type="development level" value="Tbio"/>
</dbReference>
<dbReference type="PRO" id="PR:Q8TAM6"/>
<dbReference type="Proteomes" id="UP000005640">
    <property type="component" value="Chromosome 2"/>
</dbReference>
<dbReference type="RNAct" id="Q8TAM6">
    <property type="molecule type" value="protein"/>
</dbReference>
<dbReference type="Bgee" id="ENSG00000136541">
    <property type="expression patterns" value="Expressed in corpus callosum and 117 other cell types or tissues"/>
</dbReference>
<dbReference type="ExpressionAtlas" id="Q8TAM6">
    <property type="expression patterns" value="baseline and differential"/>
</dbReference>
<dbReference type="GO" id="GO:0005938">
    <property type="term" value="C:cell cortex"/>
    <property type="evidence" value="ECO:0000314"/>
    <property type="project" value="UniProtKB"/>
</dbReference>
<dbReference type="GO" id="GO:0005737">
    <property type="term" value="C:cytoplasm"/>
    <property type="evidence" value="ECO:0000314"/>
    <property type="project" value="UniProtKB"/>
</dbReference>
<dbReference type="GO" id="GO:0005856">
    <property type="term" value="C:cytoskeleton"/>
    <property type="evidence" value="ECO:0007669"/>
    <property type="project" value="UniProtKB-SubCell"/>
</dbReference>
<dbReference type="GO" id="GO:0070062">
    <property type="term" value="C:extracellular exosome"/>
    <property type="evidence" value="ECO:0007005"/>
    <property type="project" value="UniProtKB"/>
</dbReference>
<dbReference type="GO" id="GO:0030175">
    <property type="term" value="C:filopodium"/>
    <property type="evidence" value="ECO:0000318"/>
    <property type="project" value="GO_Central"/>
</dbReference>
<dbReference type="GO" id="GO:0097386">
    <property type="term" value="C:glial cell projection"/>
    <property type="evidence" value="ECO:0007669"/>
    <property type="project" value="Ensembl"/>
</dbReference>
<dbReference type="GO" id="GO:0033269">
    <property type="term" value="C:internode region of axon"/>
    <property type="evidence" value="ECO:0000314"/>
    <property type="project" value="UniProtKB"/>
</dbReference>
<dbReference type="GO" id="GO:0043209">
    <property type="term" value="C:myelin sheath"/>
    <property type="evidence" value="ECO:0000318"/>
    <property type="project" value="GO_Central"/>
</dbReference>
<dbReference type="GO" id="GO:0043025">
    <property type="term" value="C:neuronal cell body"/>
    <property type="evidence" value="ECO:0000318"/>
    <property type="project" value="GO_Central"/>
</dbReference>
<dbReference type="GO" id="GO:0033270">
    <property type="term" value="C:paranode region of axon"/>
    <property type="evidence" value="ECO:0000314"/>
    <property type="project" value="UniProtKB"/>
</dbReference>
<dbReference type="GO" id="GO:0051015">
    <property type="term" value="F:actin filament binding"/>
    <property type="evidence" value="ECO:0000318"/>
    <property type="project" value="GO_Central"/>
</dbReference>
<dbReference type="GO" id="GO:0007015">
    <property type="term" value="P:actin filament organization"/>
    <property type="evidence" value="ECO:0000314"/>
    <property type="project" value="UniProtKB"/>
</dbReference>
<dbReference type="GO" id="GO:0001763">
    <property type="term" value="P:morphogenesis of a branching structure"/>
    <property type="evidence" value="ECO:0000318"/>
    <property type="project" value="GO_Central"/>
</dbReference>
<dbReference type="GO" id="GO:0031344">
    <property type="term" value="P:regulation of cell projection organization"/>
    <property type="evidence" value="ECO:0000314"/>
    <property type="project" value="UniProtKB"/>
</dbReference>
<dbReference type="GO" id="GO:0008360">
    <property type="term" value="P:regulation of cell shape"/>
    <property type="evidence" value="ECO:0000314"/>
    <property type="project" value="UniProtKB"/>
</dbReference>
<dbReference type="Gene3D" id="6.10.360.10">
    <property type="match status" value="1"/>
</dbReference>
<dbReference type="InterPro" id="IPR045346">
    <property type="entry name" value="Ermin"/>
</dbReference>
<dbReference type="InterPro" id="IPR008954">
    <property type="entry name" value="Moesin_tail_sf"/>
</dbReference>
<dbReference type="PANTHER" id="PTHR47137">
    <property type="entry name" value="ERMIN"/>
    <property type="match status" value="1"/>
</dbReference>
<dbReference type="PANTHER" id="PTHR47137:SF1">
    <property type="entry name" value="ERMIN"/>
    <property type="match status" value="1"/>
</dbReference>
<dbReference type="Pfam" id="PF20491">
    <property type="entry name" value="Ermin"/>
    <property type="match status" value="1"/>
</dbReference>
<dbReference type="SUPFAM" id="SSF48678">
    <property type="entry name" value="Moesin tail domain"/>
    <property type="match status" value="1"/>
</dbReference>
<comment type="function">
    <text evidence="1">Plays a role in cytoskeletal rearrangements during the late wrapping and/or compaction phases of myelinogenesis as well as in maintenance and stability of myelin sheath in the adult. May play an important role in late-stage oligodendroglia maturation, myelin/Ranvier node formation during CNS development, and in the maintenance and plasticity of related structures in the mature CNS (By similarity).</text>
</comment>
<comment type="subunit">
    <text evidence="1">Binds actin.</text>
</comment>
<comment type="interaction">
    <interactant intactId="EBI-2681068">
        <id>Q8TAM6</id>
    </interactant>
    <interactant intactId="EBI-743502">
        <id>Q8WWV3</id>
        <label>RTN4IP1</label>
    </interactant>
    <organismsDiffer>false</organismsDiffer>
    <experiments>3</experiments>
</comment>
<comment type="subcellular location">
    <subcellularLocation>
        <location evidence="1">Cytoplasm</location>
        <location evidence="1">Cytoskeleton</location>
    </subcellularLocation>
</comment>
<comment type="alternative products">
    <event type="alternative splicing"/>
    <isoform>
        <id>Q8TAM6-1</id>
        <name>1</name>
        <sequence type="displayed"/>
    </isoform>
    <isoform>
        <id>Q8TAM6-2</id>
        <name>2</name>
        <sequence type="described" ref="VSP_036982"/>
    </isoform>
</comment>
<comment type="tissue specificity">
    <text evidence="5">Highly expressed in adult and fetal brain. Expressed at intermediate levels in the lung and liver.</text>
</comment>
<comment type="sequence caution" evidence="7">
    <conflict type="erroneous initiation">
        <sequence resource="EMBL-CDS" id="BAA86503"/>
    </conflict>
</comment>
<reference key="1">
    <citation type="journal article" date="2006" name="J. Neurosci.">
        <title>Ermin, a myelinating oligodendrocyte-specific protein that regulates cell morphology.</title>
        <authorList>
            <person name="Brockschnieder D."/>
            <person name="Sabanay H."/>
            <person name="Riethmacher D."/>
            <person name="Peles E."/>
        </authorList>
    </citation>
    <scope>NUCLEOTIDE SEQUENCE [MRNA] (ISOFORM 1)</scope>
    <source>
        <tissue>Brain</tissue>
    </source>
</reference>
<reference key="2">
    <citation type="journal article" date="1999" name="DNA Res.">
        <title>Characterization of cDNA clones selected by the GeneMark analysis from size-fractionated cDNA libraries from human brain.</title>
        <authorList>
            <person name="Hirosawa M."/>
            <person name="Nagase T."/>
            <person name="Ishikawa K."/>
            <person name="Kikuno R."/>
            <person name="Nomura N."/>
            <person name="Ohara O."/>
        </authorList>
    </citation>
    <scope>NUCLEOTIDE SEQUENCE [LARGE SCALE MRNA] (ISOFORM 1)</scope>
    <scope>TISSUE SPECIFICITY</scope>
    <source>
        <tissue>Brain</tissue>
    </source>
</reference>
<reference key="3">
    <citation type="journal article" date="2004" name="Nat. Genet.">
        <title>Complete sequencing and characterization of 21,243 full-length human cDNAs.</title>
        <authorList>
            <person name="Ota T."/>
            <person name="Suzuki Y."/>
            <person name="Nishikawa T."/>
            <person name="Otsuki T."/>
            <person name="Sugiyama T."/>
            <person name="Irie R."/>
            <person name="Wakamatsu A."/>
            <person name="Hayashi K."/>
            <person name="Sato H."/>
            <person name="Nagai K."/>
            <person name="Kimura K."/>
            <person name="Makita H."/>
            <person name="Sekine M."/>
            <person name="Obayashi M."/>
            <person name="Nishi T."/>
            <person name="Shibahara T."/>
            <person name="Tanaka T."/>
            <person name="Ishii S."/>
            <person name="Yamamoto J."/>
            <person name="Saito K."/>
            <person name="Kawai Y."/>
            <person name="Isono Y."/>
            <person name="Nakamura Y."/>
            <person name="Nagahari K."/>
            <person name="Murakami K."/>
            <person name="Yasuda T."/>
            <person name="Iwayanagi T."/>
            <person name="Wagatsuma M."/>
            <person name="Shiratori A."/>
            <person name="Sudo H."/>
            <person name="Hosoiri T."/>
            <person name="Kaku Y."/>
            <person name="Kodaira H."/>
            <person name="Kondo H."/>
            <person name="Sugawara M."/>
            <person name="Takahashi M."/>
            <person name="Kanda K."/>
            <person name="Yokoi T."/>
            <person name="Furuya T."/>
            <person name="Kikkawa E."/>
            <person name="Omura Y."/>
            <person name="Abe K."/>
            <person name="Kamihara K."/>
            <person name="Katsuta N."/>
            <person name="Sato K."/>
            <person name="Tanikawa M."/>
            <person name="Yamazaki M."/>
            <person name="Ninomiya K."/>
            <person name="Ishibashi T."/>
            <person name="Yamashita H."/>
            <person name="Murakawa K."/>
            <person name="Fujimori K."/>
            <person name="Tanai H."/>
            <person name="Kimata M."/>
            <person name="Watanabe M."/>
            <person name="Hiraoka S."/>
            <person name="Chiba Y."/>
            <person name="Ishida S."/>
            <person name="Ono Y."/>
            <person name="Takiguchi S."/>
            <person name="Watanabe S."/>
            <person name="Yosida M."/>
            <person name="Hotuta T."/>
            <person name="Kusano J."/>
            <person name="Kanehori K."/>
            <person name="Takahashi-Fujii A."/>
            <person name="Hara H."/>
            <person name="Tanase T.-O."/>
            <person name="Nomura Y."/>
            <person name="Togiya S."/>
            <person name="Komai F."/>
            <person name="Hara R."/>
            <person name="Takeuchi K."/>
            <person name="Arita M."/>
            <person name="Imose N."/>
            <person name="Musashino K."/>
            <person name="Yuuki H."/>
            <person name="Oshima A."/>
            <person name="Sasaki N."/>
            <person name="Aotsuka S."/>
            <person name="Yoshikawa Y."/>
            <person name="Matsunawa H."/>
            <person name="Ichihara T."/>
            <person name="Shiohata N."/>
            <person name="Sano S."/>
            <person name="Moriya S."/>
            <person name="Momiyama H."/>
            <person name="Satoh N."/>
            <person name="Takami S."/>
            <person name="Terashima Y."/>
            <person name="Suzuki O."/>
            <person name="Nakagawa S."/>
            <person name="Senoh A."/>
            <person name="Mizoguchi H."/>
            <person name="Goto Y."/>
            <person name="Shimizu F."/>
            <person name="Wakebe H."/>
            <person name="Hishigaki H."/>
            <person name="Watanabe T."/>
            <person name="Sugiyama A."/>
            <person name="Takemoto M."/>
            <person name="Kawakami B."/>
            <person name="Yamazaki M."/>
            <person name="Watanabe K."/>
            <person name="Kumagai A."/>
            <person name="Itakura S."/>
            <person name="Fukuzumi Y."/>
            <person name="Fujimori Y."/>
            <person name="Komiyama M."/>
            <person name="Tashiro H."/>
            <person name="Tanigami A."/>
            <person name="Fujiwara T."/>
            <person name="Ono T."/>
            <person name="Yamada K."/>
            <person name="Fujii Y."/>
            <person name="Ozaki K."/>
            <person name="Hirao M."/>
            <person name="Ohmori Y."/>
            <person name="Kawabata A."/>
            <person name="Hikiji T."/>
            <person name="Kobatake N."/>
            <person name="Inagaki H."/>
            <person name="Ikema Y."/>
            <person name="Okamoto S."/>
            <person name="Okitani R."/>
            <person name="Kawakami T."/>
            <person name="Noguchi S."/>
            <person name="Itoh T."/>
            <person name="Shigeta K."/>
            <person name="Senba T."/>
            <person name="Matsumura K."/>
            <person name="Nakajima Y."/>
            <person name="Mizuno T."/>
            <person name="Morinaga M."/>
            <person name="Sasaki M."/>
            <person name="Togashi T."/>
            <person name="Oyama M."/>
            <person name="Hata H."/>
            <person name="Watanabe M."/>
            <person name="Komatsu T."/>
            <person name="Mizushima-Sugano J."/>
            <person name="Satoh T."/>
            <person name="Shirai Y."/>
            <person name="Takahashi Y."/>
            <person name="Nakagawa K."/>
            <person name="Okumura K."/>
            <person name="Nagase T."/>
            <person name="Nomura N."/>
            <person name="Kikuchi H."/>
            <person name="Masuho Y."/>
            <person name="Yamashita R."/>
            <person name="Nakai K."/>
            <person name="Yada T."/>
            <person name="Nakamura Y."/>
            <person name="Ohara O."/>
            <person name="Isogai T."/>
            <person name="Sugano S."/>
        </authorList>
    </citation>
    <scope>NUCLEOTIDE SEQUENCE [LARGE SCALE MRNA] (ISOFORM 2)</scope>
    <source>
        <tissue>Thalamus</tissue>
    </source>
</reference>
<reference key="4">
    <citation type="journal article" date="2005" name="Nature">
        <title>Generation and annotation of the DNA sequences of human chromosomes 2 and 4.</title>
        <authorList>
            <person name="Hillier L.W."/>
            <person name="Graves T.A."/>
            <person name="Fulton R.S."/>
            <person name="Fulton L.A."/>
            <person name="Pepin K.H."/>
            <person name="Minx P."/>
            <person name="Wagner-McPherson C."/>
            <person name="Layman D."/>
            <person name="Wylie K."/>
            <person name="Sekhon M."/>
            <person name="Becker M.C."/>
            <person name="Fewell G.A."/>
            <person name="Delehaunty K.D."/>
            <person name="Miner T.L."/>
            <person name="Nash W.E."/>
            <person name="Kremitzki C."/>
            <person name="Oddy L."/>
            <person name="Du H."/>
            <person name="Sun H."/>
            <person name="Bradshaw-Cordum H."/>
            <person name="Ali J."/>
            <person name="Carter J."/>
            <person name="Cordes M."/>
            <person name="Harris A."/>
            <person name="Isak A."/>
            <person name="van Brunt A."/>
            <person name="Nguyen C."/>
            <person name="Du F."/>
            <person name="Courtney L."/>
            <person name="Kalicki J."/>
            <person name="Ozersky P."/>
            <person name="Abbott S."/>
            <person name="Armstrong J."/>
            <person name="Belter E.A."/>
            <person name="Caruso L."/>
            <person name="Cedroni M."/>
            <person name="Cotton M."/>
            <person name="Davidson T."/>
            <person name="Desai A."/>
            <person name="Elliott G."/>
            <person name="Erb T."/>
            <person name="Fronick C."/>
            <person name="Gaige T."/>
            <person name="Haakenson W."/>
            <person name="Haglund K."/>
            <person name="Holmes A."/>
            <person name="Harkins R."/>
            <person name="Kim K."/>
            <person name="Kruchowski S.S."/>
            <person name="Strong C.M."/>
            <person name="Grewal N."/>
            <person name="Goyea E."/>
            <person name="Hou S."/>
            <person name="Levy A."/>
            <person name="Martinka S."/>
            <person name="Mead K."/>
            <person name="McLellan M.D."/>
            <person name="Meyer R."/>
            <person name="Randall-Maher J."/>
            <person name="Tomlinson C."/>
            <person name="Dauphin-Kohlberg S."/>
            <person name="Kozlowicz-Reilly A."/>
            <person name="Shah N."/>
            <person name="Swearengen-Shahid S."/>
            <person name="Snider J."/>
            <person name="Strong J.T."/>
            <person name="Thompson J."/>
            <person name="Yoakum M."/>
            <person name="Leonard S."/>
            <person name="Pearman C."/>
            <person name="Trani L."/>
            <person name="Radionenko M."/>
            <person name="Waligorski J.E."/>
            <person name="Wang C."/>
            <person name="Rock S.M."/>
            <person name="Tin-Wollam A.-M."/>
            <person name="Maupin R."/>
            <person name="Latreille P."/>
            <person name="Wendl M.C."/>
            <person name="Yang S.-P."/>
            <person name="Pohl C."/>
            <person name="Wallis J.W."/>
            <person name="Spieth J."/>
            <person name="Bieri T.A."/>
            <person name="Berkowicz N."/>
            <person name="Nelson J.O."/>
            <person name="Osborne J."/>
            <person name="Ding L."/>
            <person name="Meyer R."/>
            <person name="Sabo A."/>
            <person name="Shotland Y."/>
            <person name="Sinha P."/>
            <person name="Wohldmann P.E."/>
            <person name="Cook L.L."/>
            <person name="Hickenbotham M.T."/>
            <person name="Eldred J."/>
            <person name="Williams D."/>
            <person name="Jones T.A."/>
            <person name="She X."/>
            <person name="Ciccarelli F.D."/>
            <person name="Izaurralde E."/>
            <person name="Taylor J."/>
            <person name="Schmutz J."/>
            <person name="Myers R.M."/>
            <person name="Cox D.R."/>
            <person name="Huang X."/>
            <person name="McPherson J.D."/>
            <person name="Mardis E.R."/>
            <person name="Clifton S.W."/>
            <person name="Warren W.C."/>
            <person name="Chinwalla A.T."/>
            <person name="Eddy S.R."/>
            <person name="Marra M.A."/>
            <person name="Ovcharenko I."/>
            <person name="Furey T.S."/>
            <person name="Miller W."/>
            <person name="Eichler E.E."/>
            <person name="Bork P."/>
            <person name="Suyama M."/>
            <person name="Torrents D."/>
            <person name="Waterston R.H."/>
            <person name="Wilson R.K."/>
        </authorList>
    </citation>
    <scope>NUCLEOTIDE SEQUENCE [LARGE SCALE GENOMIC DNA]</scope>
</reference>
<reference key="5">
    <citation type="submission" date="2005-09" db="EMBL/GenBank/DDBJ databases">
        <authorList>
            <person name="Mural R.J."/>
            <person name="Istrail S."/>
            <person name="Sutton G.G."/>
            <person name="Florea L."/>
            <person name="Halpern A.L."/>
            <person name="Mobarry C.M."/>
            <person name="Lippert R."/>
            <person name="Walenz B."/>
            <person name="Shatkay H."/>
            <person name="Dew I."/>
            <person name="Miller J.R."/>
            <person name="Flanigan M.J."/>
            <person name="Edwards N.J."/>
            <person name="Bolanos R."/>
            <person name="Fasulo D."/>
            <person name="Halldorsson B.V."/>
            <person name="Hannenhalli S."/>
            <person name="Turner R."/>
            <person name="Yooseph S."/>
            <person name="Lu F."/>
            <person name="Nusskern D.R."/>
            <person name="Shue B.C."/>
            <person name="Zheng X.H."/>
            <person name="Zhong F."/>
            <person name="Delcher A.L."/>
            <person name="Huson D.H."/>
            <person name="Kravitz S.A."/>
            <person name="Mouchard L."/>
            <person name="Reinert K."/>
            <person name="Remington K.A."/>
            <person name="Clark A.G."/>
            <person name="Waterman M.S."/>
            <person name="Eichler E.E."/>
            <person name="Adams M.D."/>
            <person name="Hunkapiller M.W."/>
            <person name="Myers E.W."/>
            <person name="Venter J.C."/>
        </authorList>
    </citation>
    <scope>NUCLEOTIDE SEQUENCE [LARGE SCALE GENOMIC DNA]</scope>
</reference>
<reference key="6">
    <citation type="journal article" date="2004" name="Genome Res.">
        <title>The status, quality, and expansion of the NIH full-length cDNA project: the Mammalian Gene Collection (MGC).</title>
        <authorList>
            <consortium name="The MGC Project Team"/>
        </authorList>
    </citation>
    <scope>NUCLEOTIDE SEQUENCE [LARGE SCALE MRNA] (ISOFORM 1)</scope>
    <source>
        <tissue>Brain</tissue>
    </source>
</reference>
<accession>Q8TAM6</accession>
<accession>B4DKA6</accession>
<accession>Q9ULN1</accession>
<evidence type="ECO:0000250" key="1"/>
<evidence type="ECO:0000250" key="2">
    <source>
        <dbReference type="UniProtKB" id="Q5EBJ4"/>
    </source>
</evidence>
<evidence type="ECO:0000250" key="3">
    <source>
        <dbReference type="UniProtKB" id="Q5RJL0"/>
    </source>
</evidence>
<evidence type="ECO:0000256" key="4">
    <source>
        <dbReference type="SAM" id="MobiDB-lite"/>
    </source>
</evidence>
<evidence type="ECO:0000269" key="5">
    <source>
    </source>
</evidence>
<evidence type="ECO:0000303" key="6">
    <source>
    </source>
</evidence>
<evidence type="ECO:0000305" key="7"/>
<organism>
    <name type="scientific">Homo sapiens</name>
    <name type="common">Human</name>
    <dbReference type="NCBI Taxonomy" id="9606"/>
    <lineage>
        <taxon>Eukaryota</taxon>
        <taxon>Metazoa</taxon>
        <taxon>Chordata</taxon>
        <taxon>Craniata</taxon>
        <taxon>Vertebrata</taxon>
        <taxon>Euteleostomi</taxon>
        <taxon>Mammalia</taxon>
        <taxon>Eutheria</taxon>
        <taxon>Euarchontoglires</taxon>
        <taxon>Primates</taxon>
        <taxon>Haplorrhini</taxon>
        <taxon>Catarrhini</taxon>
        <taxon>Hominidae</taxon>
        <taxon>Homo</taxon>
    </lineage>
</organism>